<evidence type="ECO:0000255" key="1">
    <source>
        <dbReference type="HAMAP-Rule" id="MF_00083"/>
    </source>
</evidence>
<gene>
    <name evidence="1" type="primary">pth</name>
    <name type="ordered locus">Neut_1142</name>
</gene>
<protein>
    <recommendedName>
        <fullName evidence="1">Peptidyl-tRNA hydrolase</fullName>
        <shortName evidence="1">Pth</shortName>
        <ecNumber evidence="1">3.1.1.29</ecNumber>
    </recommendedName>
</protein>
<feature type="chain" id="PRO_1000010620" description="Peptidyl-tRNA hydrolase">
    <location>
        <begin position="1"/>
        <end position="195"/>
    </location>
</feature>
<feature type="active site" description="Proton acceptor" evidence="1">
    <location>
        <position position="23"/>
    </location>
</feature>
<feature type="binding site" evidence="1">
    <location>
        <position position="18"/>
    </location>
    <ligand>
        <name>tRNA</name>
        <dbReference type="ChEBI" id="CHEBI:17843"/>
    </ligand>
</feature>
<feature type="binding site" evidence="1">
    <location>
        <position position="69"/>
    </location>
    <ligand>
        <name>tRNA</name>
        <dbReference type="ChEBI" id="CHEBI:17843"/>
    </ligand>
</feature>
<feature type="binding site" evidence="1">
    <location>
        <position position="71"/>
    </location>
    <ligand>
        <name>tRNA</name>
        <dbReference type="ChEBI" id="CHEBI:17843"/>
    </ligand>
</feature>
<feature type="binding site" evidence="1">
    <location>
        <position position="117"/>
    </location>
    <ligand>
        <name>tRNA</name>
        <dbReference type="ChEBI" id="CHEBI:17843"/>
    </ligand>
</feature>
<feature type="site" description="Discriminates between blocked and unblocked aminoacyl-tRNA" evidence="1">
    <location>
        <position position="13"/>
    </location>
</feature>
<feature type="site" description="Stabilizes the basic form of H active site to accept a proton" evidence="1">
    <location>
        <position position="96"/>
    </location>
</feature>
<keyword id="KW-0963">Cytoplasm</keyword>
<keyword id="KW-0378">Hydrolase</keyword>
<keyword id="KW-0694">RNA-binding</keyword>
<keyword id="KW-0820">tRNA-binding</keyword>
<dbReference type="EC" id="3.1.1.29" evidence="1"/>
<dbReference type="EMBL" id="CP000450">
    <property type="protein sequence ID" value="ABI59397.1"/>
    <property type="molecule type" value="Genomic_DNA"/>
</dbReference>
<dbReference type="RefSeq" id="WP_011634217.1">
    <property type="nucleotide sequence ID" value="NC_008344.1"/>
</dbReference>
<dbReference type="SMR" id="Q0AGY5"/>
<dbReference type="STRING" id="335283.Neut_1142"/>
<dbReference type="KEGG" id="net:Neut_1142"/>
<dbReference type="eggNOG" id="COG0193">
    <property type="taxonomic scope" value="Bacteria"/>
</dbReference>
<dbReference type="HOGENOM" id="CLU_062456_3_1_4"/>
<dbReference type="OrthoDB" id="9800507at2"/>
<dbReference type="Proteomes" id="UP000001966">
    <property type="component" value="Chromosome"/>
</dbReference>
<dbReference type="GO" id="GO:0005737">
    <property type="term" value="C:cytoplasm"/>
    <property type="evidence" value="ECO:0007669"/>
    <property type="project" value="UniProtKB-SubCell"/>
</dbReference>
<dbReference type="GO" id="GO:0004045">
    <property type="term" value="F:peptidyl-tRNA hydrolase activity"/>
    <property type="evidence" value="ECO:0007669"/>
    <property type="project" value="UniProtKB-UniRule"/>
</dbReference>
<dbReference type="GO" id="GO:0000049">
    <property type="term" value="F:tRNA binding"/>
    <property type="evidence" value="ECO:0007669"/>
    <property type="project" value="UniProtKB-UniRule"/>
</dbReference>
<dbReference type="GO" id="GO:0006515">
    <property type="term" value="P:protein quality control for misfolded or incompletely synthesized proteins"/>
    <property type="evidence" value="ECO:0007669"/>
    <property type="project" value="UniProtKB-UniRule"/>
</dbReference>
<dbReference type="GO" id="GO:0072344">
    <property type="term" value="P:rescue of stalled ribosome"/>
    <property type="evidence" value="ECO:0007669"/>
    <property type="project" value="UniProtKB-UniRule"/>
</dbReference>
<dbReference type="CDD" id="cd00462">
    <property type="entry name" value="PTH"/>
    <property type="match status" value="1"/>
</dbReference>
<dbReference type="FunFam" id="3.40.50.1470:FF:000001">
    <property type="entry name" value="Peptidyl-tRNA hydrolase"/>
    <property type="match status" value="1"/>
</dbReference>
<dbReference type="Gene3D" id="3.40.50.1470">
    <property type="entry name" value="Peptidyl-tRNA hydrolase"/>
    <property type="match status" value="1"/>
</dbReference>
<dbReference type="HAMAP" id="MF_00083">
    <property type="entry name" value="Pept_tRNA_hydro_bact"/>
    <property type="match status" value="1"/>
</dbReference>
<dbReference type="InterPro" id="IPR001328">
    <property type="entry name" value="Pept_tRNA_hydro"/>
</dbReference>
<dbReference type="InterPro" id="IPR018171">
    <property type="entry name" value="Pept_tRNA_hydro_CS"/>
</dbReference>
<dbReference type="InterPro" id="IPR036416">
    <property type="entry name" value="Pept_tRNA_hydro_sf"/>
</dbReference>
<dbReference type="NCBIfam" id="TIGR00447">
    <property type="entry name" value="pth"/>
    <property type="match status" value="1"/>
</dbReference>
<dbReference type="PANTHER" id="PTHR17224">
    <property type="entry name" value="PEPTIDYL-TRNA HYDROLASE"/>
    <property type="match status" value="1"/>
</dbReference>
<dbReference type="PANTHER" id="PTHR17224:SF1">
    <property type="entry name" value="PEPTIDYL-TRNA HYDROLASE"/>
    <property type="match status" value="1"/>
</dbReference>
<dbReference type="Pfam" id="PF01195">
    <property type="entry name" value="Pept_tRNA_hydro"/>
    <property type="match status" value="1"/>
</dbReference>
<dbReference type="SUPFAM" id="SSF53178">
    <property type="entry name" value="Peptidyl-tRNA hydrolase-like"/>
    <property type="match status" value="1"/>
</dbReference>
<dbReference type="PROSITE" id="PS01196">
    <property type="entry name" value="PEPT_TRNA_HYDROL_2"/>
    <property type="match status" value="1"/>
</dbReference>
<reference key="1">
    <citation type="journal article" date="2007" name="Environ. Microbiol.">
        <title>Whole-genome analysis of the ammonia-oxidizing bacterium, Nitrosomonas eutropha C91: implications for niche adaptation.</title>
        <authorList>
            <person name="Stein L.Y."/>
            <person name="Arp D.J."/>
            <person name="Berube P.M."/>
            <person name="Chain P.S."/>
            <person name="Hauser L."/>
            <person name="Jetten M.S."/>
            <person name="Klotz M.G."/>
            <person name="Larimer F.W."/>
            <person name="Norton J.M."/>
            <person name="Op den Camp H.J.M."/>
            <person name="Shin M."/>
            <person name="Wei X."/>
        </authorList>
    </citation>
    <scope>NUCLEOTIDE SEQUENCE [LARGE SCALE GENOMIC DNA]</scope>
    <source>
        <strain>DSM 101675 / C91 / Nm57</strain>
    </source>
</reference>
<sequence>MELPIRLVVGLGNPGDKYTSTRHNIGSDWLDRLADAQRVSFALDIRFRGLCARIVQSDTDIWLLKPQTYMNASGMSVGAMCRYYKITPEQILVVHDELDLQPGIIKLKSGGGTGGHNGLKSIVADLSTQVFWRLRIGVGHPGDRNQVVDYVLHLPRREEAALIDEAIDHSIQVWPLIARGNFAAAMQQLHTRQEN</sequence>
<accession>Q0AGY5</accession>
<comment type="function">
    <text evidence="1">Hydrolyzes ribosome-free peptidyl-tRNAs (with 1 or more amino acids incorporated), which drop off the ribosome during protein synthesis, or as a result of ribosome stalling.</text>
</comment>
<comment type="function">
    <text evidence="1">Catalyzes the release of premature peptidyl moieties from peptidyl-tRNA molecules trapped in stalled 50S ribosomal subunits, and thus maintains levels of free tRNAs and 50S ribosomes.</text>
</comment>
<comment type="catalytic activity">
    <reaction evidence="1">
        <text>an N-acyl-L-alpha-aminoacyl-tRNA + H2O = an N-acyl-L-amino acid + a tRNA + H(+)</text>
        <dbReference type="Rhea" id="RHEA:54448"/>
        <dbReference type="Rhea" id="RHEA-COMP:10123"/>
        <dbReference type="Rhea" id="RHEA-COMP:13883"/>
        <dbReference type="ChEBI" id="CHEBI:15377"/>
        <dbReference type="ChEBI" id="CHEBI:15378"/>
        <dbReference type="ChEBI" id="CHEBI:59874"/>
        <dbReference type="ChEBI" id="CHEBI:78442"/>
        <dbReference type="ChEBI" id="CHEBI:138191"/>
        <dbReference type="EC" id="3.1.1.29"/>
    </reaction>
</comment>
<comment type="subunit">
    <text evidence="1">Monomer.</text>
</comment>
<comment type="subcellular location">
    <subcellularLocation>
        <location evidence="1">Cytoplasm</location>
    </subcellularLocation>
</comment>
<comment type="similarity">
    <text evidence="1">Belongs to the PTH family.</text>
</comment>
<organism>
    <name type="scientific">Nitrosomonas eutropha (strain DSM 101675 / C91 / Nm57)</name>
    <dbReference type="NCBI Taxonomy" id="335283"/>
    <lineage>
        <taxon>Bacteria</taxon>
        <taxon>Pseudomonadati</taxon>
        <taxon>Pseudomonadota</taxon>
        <taxon>Betaproteobacteria</taxon>
        <taxon>Nitrosomonadales</taxon>
        <taxon>Nitrosomonadaceae</taxon>
        <taxon>Nitrosomonas</taxon>
    </lineage>
</organism>
<proteinExistence type="inferred from homology"/>
<name>PTH_NITEC</name>